<comment type="interaction">
    <interactant intactId="EBI-15193831">
        <id>F4K5T4</id>
    </interactant>
    <interactant intactId="EBI-15198431">
        <id>Q9CAV7</id>
        <label>At3g04930</label>
    </interactant>
    <organismsDiffer>false</organismsDiffer>
    <experiments>4</experiments>
</comment>
<comment type="interaction">
    <interactant intactId="EBI-15193831">
        <id>F4K5T4</id>
    </interactant>
    <interactant intactId="EBI-4425826">
        <id>Q8LA53</id>
        <label>MBD2</label>
    </interactant>
    <organismsDiffer>false</organismsDiffer>
    <experiments>3</experiments>
</comment>
<comment type="interaction">
    <interactant intactId="EBI-15193831">
        <id>F4K5T4</id>
    </interactant>
    <interactant intactId="EBI-15191715">
        <id>Q9LYB9</id>
        <label>MBD4</label>
    </interactant>
    <organismsDiffer>false</organismsDiffer>
    <experiments>3</experiments>
</comment>
<comment type="interaction">
    <interactant intactId="EBI-15193831">
        <id>F4K5T4</id>
    </interactant>
    <interactant intactId="EBI-15191543">
        <id>Q05153</id>
        <label>SSRP1</label>
    </interactant>
    <organismsDiffer>false</organismsDiffer>
    <experiments>3</experiments>
</comment>
<comment type="similarity">
    <text evidence="2">Belongs to the GeBP family.</text>
</comment>
<comment type="online information" name="Plant Transcription Factor Database">
    <link uri="https://planttfdb.gao-lab.org/family.php?fam=GeBP#family_intro"/>
</comment>
<accession>F4K5T4</accession>
<accession>Q8GXW7</accession>
<protein>
    <recommendedName>
        <fullName evidence="2">Probable transcription factor At5g28040</fullName>
    </recommendedName>
    <alternativeName>
        <fullName evidence="2">Storekeeper-like protein At5g28040</fullName>
    </alternativeName>
</protein>
<proteinExistence type="evidence at protein level"/>
<sequence>MASDQRDTDFSAESPDLEEDGGGGGGGRGGGETESDEDVVIPEPNEAEDDDHDPDPDPEYEDLNSPSMISRAPATKSSSGTVTVALPAGSAVPVASIPSDSDQKWHRMTEIVHQRPPIDDSRRLFQRLWTDEDEIELLRGFLDYITNHRGNSSHPPDTAPFYEQIKSKLQLEFNKNQLVEKLRRLKKKYRNVMSKFSSGKEVFFKSPHDQATFDISRKIWNQTGKIIGFEDNNVMDLEETNHVNNANGSSGFNVSVIGNANVDVDSENGLEKKVTISRKRSRSRIGKIDEDKPVLAPCDGVIPNAVNLNENVAVGCDFGDGRNLGVLIEETVKNCVSPMIKEMMNSTTGMMMAATGGFPGGGAHALGVLSPMLMPSMNLGFGGKGVGDERWRRQQILELEVYSRRLELVQEQIRATVNELKTMPNGG</sequence>
<reference key="1">
    <citation type="journal article" date="2000" name="Nature">
        <title>Sequence and analysis of chromosome 5 of the plant Arabidopsis thaliana.</title>
        <authorList>
            <person name="Tabata S."/>
            <person name="Kaneko T."/>
            <person name="Nakamura Y."/>
            <person name="Kotani H."/>
            <person name="Kato T."/>
            <person name="Asamizu E."/>
            <person name="Miyajima N."/>
            <person name="Sasamoto S."/>
            <person name="Kimura T."/>
            <person name="Hosouchi T."/>
            <person name="Kawashima K."/>
            <person name="Kohara M."/>
            <person name="Matsumoto M."/>
            <person name="Matsuno A."/>
            <person name="Muraki A."/>
            <person name="Nakayama S."/>
            <person name="Nakazaki N."/>
            <person name="Naruo K."/>
            <person name="Okumura S."/>
            <person name="Shinpo S."/>
            <person name="Takeuchi C."/>
            <person name="Wada T."/>
            <person name="Watanabe A."/>
            <person name="Yamada M."/>
            <person name="Yasuda M."/>
            <person name="Sato S."/>
            <person name="de la Bastide M."/>
            <person name="Huang E."/>
            <person name="Spiegel L."/>
            <person name="Gnoj L."/>
            <person name="O'Shaughnessy A."/>
            <person name="Preston R."/>
            <person name="Habermann K."/>
            <person name="Murray J."/>
            <person name="Johnson D."/>
            <person name="Rohlfing T."/>
            <person name="Nelson J."/>
            <person name="Stoneking T."/>
            <person name="Pepin K."/>
            <person name="Spieth J."/>
            <person name="Sekhon M."/>
            <person name="Armstrong J."/>
            <person name="Becker M."/>
            <person name="Belter E."/>
            <person name="Cordum H."/>
            <person name="Cordes M."/>
            <person name="Courtney L."/>
            <person name="Courtney W."/>
            <person name="Dante M."/>
            <person name="Du H."/>
            <person name="Edwards J."/>
            <person name="Fryman J."/>
            <person name="Haakensen B."/>
            <person name="Lamar E."/>
            <person name="Latreille P."/>
            <person name="Leonard S."/>
            <person name="Meyer R."/>
            <person name="Mulvaney E."/>
            <person name="Ozersky P."/>
            <person name="Riley A."/>
            <person name="Strowmatt C."/>
            <person name="Wagner-McPherson C."/>
            <person name="Wollam A."/>
            <person name="Yoakum M."/>
            <person name="Bell M."/>
            <person name="Dedhia N."/>
            <person name="Parnell L."/>
            <person name="Shah R."/>
            <person name="Rodriguez M."/>
            <person name="Hoon See L."/>
            <person name="Vil D."/>
            <person name="Baker J."/>
            <person name="Kirchoff K."/>
            <person name="Toth K."/>
            <person name="King L."/>
            <person name="Bahret A."/>
            <person name="Miller B."/>
            <person name="Marra M.A."/>
            <person name="Martienssen R."/>
            <person name="McCombie W.R."/>
            <person name="Wilson R.K."/>
            <person name="Murphy G."/>
            <person name="Bancroft I."/>
            <person name="Volckaert G."/>
            <person name="Wambutt R."/>
            <person name="Duesterhoeft A."/>
            <person name="Stiekema W."/>
            <person name="Pohl T."/>
            <person name="Entian K.-D."/>
            <person name="Terryn N."/>
            <person name="Hartley N."/>
            <person name="Bent E."/>
            <person name="Johnson S."/>
            <person name="Langham S.-A."/>
            <person name="McCullagh B."/>
            <person name="Robben J."/>
            <person name="Grymonprez B."/>
            <person name="Zimmermann W."/>
            <person name="Ramsperger U."/>
            <person name="Wedler H."/>
            <person name="Balke K."/>
            <person name="Wedler E."/>
            <person name="Peters S."/>
            <person name="van Staveren M."/>
            <person name="Dirkse W."/>
            <person name="Mooijman P."/>
            <person name="Klein Lankhorst R."/>
            <person name="Weitzenegger T."/>
            <person name="Bothe G."/>
            <person name="Rose M."/>
            <person name="Hauf J."/>
            <person name="Berneiser S."/>
            <person name="Hempel S."/>
            <person name="Feldpausch M."/>
            <person name="Lamberth S."/>
            <person name="Villarroel R."/>
            <person name="Gielen J."/>
            <person name="Ardiles W."/>
            <person name="Bents O."/>
            <person name="Lemcke K."/>
            <person name="Kolesov G."/>
            <person name="Mayer K.F.X."/>
            <person name="Rudd S."/>
            <person name="Schoof H."/>
            <person name="Schueller C."/>
            <person name="Zaccaria P."/>
            <person name="Mewes H.-W."/>
            <person name="Bevan M."/>
            <person name="Fransz P.F."/>
        </authorList>
    </citation>
    <scope>NUCLEOTIDE SEQUENCE [LARGE SCALE GENOMIC DNA]</scope>
    <source>
        <strain>cv. Columbia</strain>
    </source>
</reference>
<reference key="2">
    <citation type="journal article" date="2017" name="Plant J.">
        <title>Araport11: a complete reannotation of the Arabidopsis thaliana reference genome.</title>
        <authorList>
            <person name="Cheng C.Y."/>
            <person name="Krishnakumar V."/>
            <person name="Chan A.P."/>
            <person name="Thibaud-Nissen F."/>
            <person name="Schobel S."/>
            <person name="Town C.D."/>
        </authorList>
    </citation>
    <scope>GENOME REANNOTATION</scope>
    <source>
        <strain>cv. Columbia</strain>
    </source>
</reference>
<reference key="3">
    <citation type="journal article" date="2002" name="Science">
        <title>Functional annotation of a full-length Arabidopsis cDNA collection.</title>
        <authorList>
            <person name="Seki M."/>
            <person name="Narusaka M."/>
            <person name="Kamiya A."/>
            <person name="Ishida J."/>
            <person name="Satou M."/>
            <person name="Sakurai T."/>
            <person name="Nakajima M."/>
            <person name="Enju A."/>
            <person name="Akiyama K."/>
            <person name="Oono Y."/>
            <person name="Muramatsu M."/>
            <person name="Hayashizaki Y."/>
            <person name="Kawai J."/>
            <person name="Carninci P."/>
            <person name="Itoh M."/>
            <person name="Ishii Y."/>
            <person name="Arakawa T."/>
            <person name="Shibata K."/>
            <person name="Shinagawa A."/>
            <person name="Shinozaki K."/>
        </authorList>
    </citation>
    <scope>NUCLEOTIDE SEQUENCE [LARGE SCALE MRNA]</scope>
    <source>
        <strain>cv. Columbia</strain>
    </source>
</reference>
<reference key="4">
    <citation type="journal article" date="2003" name="Science">
        <title>Empirical analysis of transcriptional activity in the Arabidopsis genome.</title>
        <authorList>
            <person name="Yamada K."/>
            <person name="Lim J."/>
            <person name="Dale J.M."/>
            <person name="Chen H."/>
            <person name="Shinn P."/>
            <person name="Palm C.J."/>
            <person name="Southwick A.M."/>
            <person name="Wu H.C."/>
            <person name="Kim C.J."/>
            <person name="Nguyen M."/>
            <person name="Pham P.K."/>
            <person name="Cheuk R.F."/>
            <person name="Karlin-Newmann G."/>
            <person name="Liu S.X."/>
            <person name="Lam B."/>
            <person name="Sakano H."/>
            <person name="Wu T."/>
            <person name="Yu G."/>
            <person name="Miranda M."/>
            <person name="Quach H.L."/>
            <person name="Tripp M."/>
            <person name="Chang C.H."/>
            <person name="Lee J.M."/>
            <person name="Toriumi M.J."/>
            <person name="Chan M.M."/>
            <person name="Tang C.C."/>
            <person name="Onodera C.S."/>
            <person name="Deng J.M."/>
            <person name="Akiyama K."/>
            <person name="Ansari Y."/>
            <person name="Arakawa T."/>
            <person name="Banh J."/>
            <person name="Banno F."/>
            <person name="Bowser L."/>
            <person name="Brooks S.Y."/>
            <person name="Carninci P."/>
            <person name="Chao Q."/>
            <person name="Choy N."/>
            <person name="Enju A."/>
            <person name="Goldsmith A.D."/>
            <person name="Gurjal M."/>
            <person name="Hansen N.F."/>
            <person name="Hayashizaki Y."/>
            <person name="Johnson-Hopson C."/>
            <person name="Hsuan V.W."/>
            <person name="Iida K."/>
            <person name="Karnes M."/>
            <person name="Khan S."/>
            <person name="Koesema E."/>
            <person name="Ishida J."/>
            <person name="Jiang P.X."/>
            <person name="Jones T."/>
            <person name="Kawai J."/>
            <person name="Kamiya A."/>
            <person name="Meyers C."/>
            <person name="Nakajima M."/>
            <person name="Narusaka M."/>
            <person name="Seki M."/>
            <person name="Sakurai T."/>
            <person name="Satou M."/>
            <person name="Tamse R."/>
            <person name="Vaysberg M."/>
            <person name="Wallender E.K."/>
            <person name="Wong C."/>
            <person name="Yamamura Y."/>
            <person name="Yuan S."/>
            <person name="Shinozaki K."/>
            <person name="Davis R.W."/>
            <person name="Theologis A."/>
            <person name="Ecker J.R."/>
        </authorList>
    </citation>
    <scope>NUCLEOTIDE SEQUENCE [LARGE SCALE MRNA]</scope>
    <source>
        <strain>cv. Columbia</strain>
    </source>
</reference>
<reference key="5">
    <citation type="journal article" date="2003" name="Plant J.">
        <title>GeBP, the first member of a new gene family in Arabidopsis, encodes a nuclear protein with DNA-binding activity and is regulated by KNAT1.</title>
        <authorList>
            <person name="Curaba J."/>
            <person name="Herzog M."/>
            <person name="Vachon G."/>
        </authorList>
    </citation>
    <scope>GENE FAMILY</scope>
</reference>
<reference key="6">
    <citation type="journal article" date="2009" name="J. Proteomics">
        <title>Phosphoproteomic analysis of nuclei-enriched fractions from Arabidopsis thaliana.</title>
        <authorList>
            <person name="Jones A.M.E."/>
            <person name="MacLean D."/>
            <person name="Studholme D.J."/>
            <person name="Serna-Sanz A."/>
            <person name="Andreasson E."/>
            <person name="Rathjen J.P."/>
            <person name="Peck S.C."/>
        </authorList>
    </citation>
    <scope>PHOSPHORYLATION [LARGE SCALE ANALYSIS] AT SER-14</scope>
    <scope>IDENTIFICATION BY MASS SPECTROMETRY [LARGE SCALE ANALYSIS]</scope>
    <source>
        <strain>cv. Columbia</strain>
    </source>
</reference>
<reference key="7">
    <citation type="journal article" date="2009" name="Plant Physiol.">
        <title>Large-scale Arabidopsis phosphoproteome profiling reveals novel chloroplast kinase substrates and phosphorylation networks.</title>
        <authorList>
            <person name="Reiland S."/>
            <person name="Messerli G."/>
            <person name="Baerenfaller K."/>
            <person name="Gerrits B."/>
            <person name="Endler A."/>
            <person name="Grossmann J."/>
            <person name="Gruissem W."/>
            <person name="Baginsky S."/>
        </authorList>
    </citation>
    <scope>IDENTIFICATION BY MASS SPECTROMETRY [LARGE SCALE ANALYSIS]</scope>
</reference>
<dbReference type="EMBL" id="AC007627">
    <property type="status" value="NOT_ANNOTATED_CDS"/>
    <property type="molecule type" value="Genomic_DNA"/>
</dbReference>
<dbReference type="EMBL" id="CP002688">
    <property type="protein sequence ID" value="AED93767.1"/>
    <property type="molecule type" value="Genomic_DNA"/>
</dbReference>
<dbReference type="EMBL" id="CP002688">
    <property type="protein sequence ID" value="ANM70113.1"/>
    <property type="molecule type" value="Genomic_DNA"/>
</dbReference>
<dbReference type="EMBL" id="BT005356">
    <property type="protein sequence ID" value="AAO63420.1"/>
    <property type="molecule type" value="mRNA"/>
</dbReference>
<dbReference type="EMBL" id="AK117998">
    <property type="protein sequence ID" value="BAC42632.1"/>
    <property type="molecule type" value="mRNA"/>
</dbReference>
<dbReference type="RefSeq" id="NP_001318667.1">
    <property type="nucleotide sequence ID" value="NM_001344056.1"/>
</dbReference>
<dbReference type="RefSeq" id="NP_198156.1">
    <property type="nucleotide sequence ID" value="NM_122687.3"/>
</dbReference>
<dbReference type="SMR" id="F4K5T4"/>
<dbReference type="FunCoup" id="F4K5T4">
    <property type="interactions" value="1675"/>
</dbReference>
<dbReference type="IntAct" id="F4K5T4">
    <property type="interactions" value="9"/>
</dbReference>
<dbReference type="STRING" id="3702.F4K5T4"/>
<dbReference type="GlyGen" id="F4K5T4">
    <property type="glycosylation" value="2 sites, 1 O-linked glycan (2 sites)"/>
</dbReference>
<dbReference type="iPTMnet" id="F4K5T4"/>
<dbReference type="PaxDb" id="3702-AT5G28040.1"/>
<dbReference type="ProteomicsDB" id="228355"/>
<dbReference type="EnsemblPlants" id="AT5G28040.1">
    <property type="protein sequence ID" value="AT5G28040.1"/>
    <property type="gene ID" value="AT5G28040"/>
</dbReference>
<dbReference type="EnsemblPlants" id="AT5G28040.2">
    <property type="protein sequence ID" value="AT5G28040.2"/>
    <property type="gene ID" value="AT5G28040"/>
</dbReference>
<dbReference type="GeneID" id="832874"/>
<dbReference type="Gramene" id="AT5G28040.1">
    <property type="protein sequence ID" value="AT5G28040.1"/>
    <property type="gene ID" value="AT5G28040"/>
</dbReference>
<dbReference type="Gramene" id="AT5G28040.2">
    <property type="protein sequence ID" value="AT5G28040.2"/>
    <property type="gene ID" value="AT5G28040"/>
</dbReference>
<dbReference type="KEGG" id="ath:AT5G28040"/>
<dbReference type="Araport" id="AT5G28040"/>
<dbReference type="TAIR" id="AT5G28040">
    <property type="gene designation" value="VFP4"/>
</dbReference>
<dbReference type="eggNOG" id="ENOG502QUAW">
    <property type="taxonomic scope" value="Eukaryota"/>
</dbReference>
<dbReference type="HOGENOM" id="CLU_032856_0_0_1"/>
<dbReference type="InParanoid" id="F4K5T4"/>
<dbReference type="OMA" id="KTMPNGG"/>
<dbReference type="CD-CODE" id="4299E36E">
    <property type="entry name" value="Nucleolus"/>
</dbReference>
<dbReference type="PRO" id="PR:F4K5T4"/>
<dbReference type="Proteomes" id="UP000006548">
    <property type="component" value="Chromosome 5"/>
</dbReference>
<dbReference type="ExpressionAtlas" id="F4K5T4">
    <property type="expression patterns" value="baseline and differential"/>
</dbReference>
<dbReference type="GO" id="GO:0005737">
    <property type="term" value="C:cytoplasm"/>
    <property type="evidence" value="ECO:0000314"/>
    <property type="project" value="TAIR"/>
</dbReference>
<dbReference type="GO" id="GO:0005634">
    <property type="term" value="C:nucleus"/>
    <property type="evidence" value="ECO:0000314"/>
    <property type="project" value="TAIR"/>
</dbReference>
<dbReference type="GO" id="GO:0000976">
    <property type="term" value="F:transcription cis-regulatory region binding"/>
    <property type="evidence" value="ECO:0000353"/>
    <property type="project" value="TAIR"/>
</dbReference>
<dbReference type="GO" id="GO:0042742">
    <property type="term" value="P:defense response to bacterium"/>
    <property type="evidence" value="ECO:0000315"/>
    <property type="project" value="TAIR"/>
</dbReference>
<dbReference type="GO" id="GO:0006355">
    <property type="term" value="P:regulation of DNA-templated transcription"/>
    <property type="evidence" value="ECO:0000304"/>
    <property type="project" value="TAIR"/>
</dbReference>
<dbReference type="InterPro" id="IPR007592">
    <property type="entry name" value="GEBP"/>
</dbReference>
<dbReference type="InterPro" id="IPR053932">
    <property type="entry name" value="GeBP-like_DBD"/>
</dbReference>
<dbReference type="PANTHER" id="PTHR31662">
    <property type="entry name" value="BNAANNG10740D PROTEIN-RELATED"/>
    <property type="match status" value="1"/>
</dbReference>
<dbReference type="PANTHER" id="PTHR31662:SF1">
    <property type="entry name" value="OS01G0249900 PROTEIN"/>
    <property type="match status" value="1"/>
</dbReference>
<dbReference type="Pfam" id="PF04504">
    <property type="entry name" value="GeBP-like_DBD"/>
    <property type="match status" value="1"/>
</dbReference>
<organism evidence="5">
    <name type="scientific">Arabidopsis thaliana</name>
    <name type="common">Mouse-ear cress</name>
    <dbReference type="NCBI Taxonomy" id="3702"/>
    <lineage>
        <taxon>Eukaryota</taxon>
        <taxon>Viridiplantae</taxon>
        <taxon>Streptophyta</taxon>
        <taxon>Embryophyta</taxon>
        <taxon>Tracheophyta</taxon>
        <taxon>Spermatophyta</taxon>
        <taxon>Magnoliopsida</taxon>
        <taxon>eudicotyledons</taxon>
        <taxon>Gunneridae</taxon>
        <taxon>Pentapetalae</taxon>
        <taxon>rosids</taxon>
        <taxon>malvids</taxon>
        <taxon>Brassicales</taxon>
        <taxon>Brassicaceae</taxon>
        <taxon>Camelineae</taxon>
        <taxon>Arabidopsis</taxon>
    </lineage>
</organism>
<gene>
    <name evidence="3" type="ordered locus">At5g28040</name>
    <name evidence="4" type="ORF">F15F15.110</name>
</gene>
<keyword id="KW-0597">Phosphoprotein</keyword>
<keyword id="KW-1185">Reference proteome</keyword>
<keyword id="KW-0804">Transcription</keyword>
<keyword id="KW-0805">Transcription regulation</keyword>
<feature type="chain" id="PRO_0000436994" description="Probable transcription factor At5g28040">
    <location>
        <begin position="1"/>
        <end position="427"/>
    </location>
</feature>
<feature type="region of interest" description="Disordered" evidence="1">
    <location>
        <begin position="1"/>
        <end position="81"/>
    </location>
</feature>
<feature type="compositionally biased region" description="Gly residues" evidence="1">
    <location>
        <begin position="22"/>
        <end position="32"/>
    </location>
</feature>
<feature type="compositionally biased region" description="Acidic residues" evidence="1">
    <location>
        <begin position="33"/>
        <end position="62"/>
    </location>
</feature>
<feature type="modified residue" description="Phosphoserine" evidence="6">
    <location>
        <position position="14"/>
    </location>
</feature>
<feature type="sequence conflict" description="In Ref. 3; AAO63420 and 4; BAC42632." evidence="2" ref="3 4">
    <original>V</original>
    <variation>E</variation>
    <location>
        <position position="234"/>
    </location>
</feature>
<evidence type="ECO:0000256" key="1">
    <source>
        <dbReference type="SAM" id="MobiDB-lite"/>
    </source>
</evidence>
<evidence type="ECO:0000305" key="2"/>
<evidence type="ECO:0000312" key="3">
    <source>
        <dbReference type="Araport" id="AT5G28040"/>
    </source>
</evidence>
<evidence type="ECO:0000312" key="4">
    <source>
        <dbReference type="EMBL" id="AC007627"/>
    </source>
</evidence>
<evidence type="ECO:0000312" key="5">
    <source>
        <dbReference type="Proteomes" id="UP000006548"/>
    </source>
</evidence>
<evidence type="ECO:0007744" key="6">
    <source>
    </source>
</evidence>
<name>STKLU_ARATH</name>